<accession>Q96K17</accession>
<accession>B3KNJ1</accession>
<accession>D3DQ32</accession>
<accession>G3V1C6</accession>
<organism>
    <name type="scientific">Homo sapiens</name>
    <name type="common">Human</name>
    <dbReference type="NCBI Taxonomy" id="9606"/>
    <lineage>
        <taxon>Eukaryota</taxon>
        <taxon>Metazoa</taxon>
        <taxon>Chordata</taxon>
        <taxon>Craniata</taxon>
        <taxon>Vertebrata</taxon>
        <taxon>Euteleostomi</taxon>
        <taxon>Mammalia</taxon>
        <taxon>Eutheria</taxon>
        <taxon>Euarchontoglires</taxon>
        <taxon>Primates</taxon>
        <taxon>Haplorrhini</taxon>
        <taxon>Catarrhini</taxon>
        <taxon>Hominidae</taxon>
        <taxon>Homo</taxon>
    </lineage>
</organism>
<keyword id="KW-0025">Alternative splicing</keyword>
<keyword id="KW-0488">Methylation</keyword>
<keyword id="KW-0597">Phosphoprotein</keyword>
<keyword id="KW-1267">Proteomics identification</keyword>
<keyword id="KW-1185">Reference proteome</keyword>
<sequence length="158" mass="17271">MNQEKLAKLQAQVRIGGKGTARRKKKVVHRTATADDKKLQSSLKKLAVNNIAGIEEVNMIKDDGTVIHFNNPKVQASLSANTFAITGHAEAKPITEMLPGILSQLGADSLTSLRKLAEQFPRQVLDSKAPKPEDIDEEDDDVPDLVENFDEASKNEAN</sequence>
<evidence type="ECO:0000250" key="1">
    <source>
        <dbReference type="UniProtKB" id="P20290"/>
    </source>
</evidence>
<evidence type="ECO:0000255" key="2">
    <source>
        <dbReference type="PROSITE-ProRule" id="PRU00507"/>
    </source>
</evidence>
<evidence type="ECO:0000256" key="3">
    <source>
        <dbReference type="SAM" id="MobiDB-lite"/>
    </source>
</evidence>
<evidence type="ECO:0000303" key="4">
    <source>
    </source>
</evidence>
<evidence type="ECO:0000303" key="5">
    <source>
    </source>
</evidence>
<evidence type="ECO:0000305" key="6"/>
<gene>
    <name type="primary">BTF3L4</name>
</gene>
<reference key="1">
    <citation type="journal article" date="2004" name="Nat. Genet.">
        <title>Complete sequencing and characterization of 21,243 full-length human cDNAs.</title>
        <authorList>
            <person name="Ota T."/>
            <person name="Suzuki Y."/>
            <person name="Nishikawa T."/>
            <person name="Otsuki T."/>
            <person name="Sugiyama T."/>
            <person name="Irie R."/>
            <person name="Wakamatsu A."/>
            <person name="Hayashi K."/>
            <person name="Sato H."/>
            <person name="Nagai K."/>
            <person name="Kimura K."/>
            <person name="Makita H."/>
            <person name="Sekine M."/>
            <person name="Obayashi M."/>
            <person name="Nishi T."/>
            <person name="Shibahara T."/>
            <person name="Tanaka T."/>
            <person name="Ishii S."/>
            <person name="Yamamoto J."/>
            <person name="Saito K."/>
            <person name="Kawai Y."/>
            <person name="Isono Y."/>
            <person name="Nakamura Y."/>
            <person name="Nagahari K."/>
            <person name="Murakami K."/>
            <person name="Yasuda T."/>
            <person name="Iwayanagi T."/>
            <person name="Wagatsuma M."/>
            <person name="Shiratori A."/>
            <person name="Sudo H."/>
            <person name="Hosoiri T."/>
            <person name="Kaku Y."/>
            <person name="Kodaira H."/>
            <person name="Kondo H."/>
            <person name="Sugawara M."/>
            <person name="Takahashi M."/>
            <person name="Kanda K."/>
            <person name="Yokoi T."/>
            <person name="Furuya T."/>
            <person name="Kikkawa E."/>
            <person name="Omura Y."/>
            <person name="Abe K."/>
            <person name="Kamihara K."/>
            <person name="Katsuta N."/>
            <person name="Sato K."/>
            <person name="Tanikawa M."/>
            <person name="Yamazaki M."/>
            <person name="Ninomiya K."/>
            <person name="Ishibashi T."/>
            <person name="Yamashita H."/>
            <person name="Murakawa K."/>
            <person name="Fujimori K."/>
            <person name="Tanai H."/>
            <person name="Kimata M."/>
            <person name="Watanabe M."/>
            <person name="Hiraoka S."/>
            <person name="Chiba Y."/>
            <person name="Ishida S."/>
            <person name="Ono Y."/>
            <person name="Takiguchi S."/>
            <person name="Watanabe S."/>
            <person name="Yosida M."/>
            <person name="Hotuta T."/>
            <person name="Kusano J."/>
            <person name="Kanehori K."/>
            <person name="Takahashi-Fujii A."/>
            <person name="Hara H."/>
            <person name="Tanase T.-O."/>
            <person name="Nomura Y."/>
            <person name="Togiya S."/>
            <person name="Komai F."/>
            <person name="Hara R."/>
            <person name="Takeuchi K."/>
            <person name="Arita M."/>
            <person name="Imose N."/>
            <person name="Musashino K."/>
            <person name="Yuuki H."/>
            <person name="Oshima A."/>
            <person name="Sasaki N."/>
            <person name="Aotsuka S."/>
            <person name="Yoshikawa Y."/>
            <person name="Matsunawa H."/>
            <person name="Ichihara T."/>
            <person name="Shiohata N."/>
            <person name="Sano S."/>
            <person name="Moriya S."/>
            <person name="Momiyama H."/>
            <person name="Satoh N."/>
            <person name="Takami S."/>
            <person name="Terashima Y."/>
            <person name="Suzuki O."/>
            <person name="Nakagawa S."/>
            <person name="Senoh A."/>
            <person name="Mizoguchi H."/>
            <person name="Goto Y."/>
            <person name="Shimizu F."/>
            <person name="Wakebe H."/>
            <person name="Hishigaki H."/>
            <person name="Watanabe T."/>
            <person name="Sugiyama A."/>
            <person name="Takemoto M."/>
            <person name="Kawakami B."/>
            <person name="Yamazaki M."/>
            <person name="Watanabe K."/>
            <person name="Kumagai A."/>
            <person name="Itakura S."/>
            <person name="Fukuzumi Y."/>
            <person name="Fujimori Y."/>
            <person name="Komiyama M."/>
            <person name="Tashiro H."/>
            <person name="Tanigami A."/>
            <person name="Fujiwara T."/>
            <person name="Ono T."/>
            <person name="Yamada K."/>
            <person name="Fujii Y."/>
            <person name="Ozaki K."/>
            <person name="Hirao M."/>
            <person name="Ohmori Y."/>
            <person name="Kawabata A."/>
            <person name="Hikiji T."/>
            <person name="Kobatake N."/>
            <person name="Inagaki H."/>
            <person name="Ikema Y."/>
            <person name="Okamoto S."/>
            <person name="Okitani R."/>
            <person name="Kawakami T."/>
            <person name="Noguchi S."/>
            <person name="Itoh T."/>
            <person name="Shigeta K."/>
            <person name="Senba T."/>
            <person name="Matsumura K."/>
            <person name="Nakajima Y."/>
            <person name="Mizuno T."/>
            <person name="Morinaga M."/>
            <person name="Sasaki M."/>
            <person name="Togashi T."/>
            <person name="Oyama M."/>
            <person name="Hata H."/>
            <person name="Watanabe M."/>
            <person name="Komatsu T."/>
            <person name="Mizushima-Sugano J."/>
            <person name="Satoh T."/>
            <person name="Shirai Y."/>
            <person name="Takahashi Y."/>
            <person name="Nakagawa K."/>
            <person name="Okumura K."/>
            <person name="Nagase T."/>
            <person name="Nomura N."/>
            <person name="Kikuchi H."/>
            <person name="Masuho Y."/>
            <person name="Yamashita R."/>
            <person name="Nakai K."/>
            <person name="Yada T."/>
            <person name="Nakamura Y."/>
            <person name="Ohara O."/>
            <person name="Isogai T."/>
            <person name="Sugano S."/>
        </authorList>
    </citation>
    <scope>NUCLEOTIDE SEQUENCE [LARGE SCALE MRNA] (ISOFORMS 1 AND 2)</scope>
    <source>
        <tissue>Placenta</tissue>
    </source>
</reference>
<reference key="2">
    <citation type="journal article" date="2006" name="Nature">
        <title>The DNA sequence and biological annotation of human chromosome 1.</title>
        <authorList>
            <person name="Gregory S.G."/>
            <person name="Barlow K.F."/>
            <person name="McLay K.E."/>
            <person name="Kaul R."/>
            <person name="Swarbreck D."/>
            <person name="Dunham A."/>
            <person name="Scott C.E."/>
            <person name="Howe K.L."/>
            <person name="Woodfine K."/>
            <person name="Spencer C.C.A."/>
            <person name="Jones M.C."/>
            <person name="Gillson C."/>
            <person name="Searle S."/>
            <person name="Zhou Y."/>
            <person name="Kokocinski F."/>
            <person name="McDonald L."/>
            <person name="Evans R."/>
            <person name="Phillips K."/>
            <person name="Atkinson A."/>
            <person name="Cooper R."/>
            <person name="Jones C."/>
            <person name="Hall R.E."/>
            <person name="Andrews T.D."/>
            <person name="Lloyd C."/>
            <person name="Ainscough R."/>
            <person name="Almeida J.P."/>
            <person name="Ambrose K.D."/>
            <person name="Anderson F."/>
            <person name="Andrew R.W."/>
            <person name="Ashwell R.I.S."/>
            <person name="Aubin K."/>
            <person name="Babbage A.K."/>
            <person name="Bagguley C.L."/>
            <person name="Bailey J."/>
            <person name="Beasley H."/>
            <person name="Bethel G."/>
            <person name="Bird C.P."/>
            <person name="Bray-Allen S."/>
            <person name="Brown J.Y."/>
            <person name="Brown A.J."/>
            <person name="Buckley D."/>
            <person name="Burton J."/>
            <person name="Bye J."/>
            <person name="Carder C."/>
            <person name="Chapman J.C."/>
            <person name="Clark S.Y."/>
            <person name="Clarke G."/>
            <person name="Clee C."/>
            <person name="Cobley V."/>
            <person name="Collier R.E."/>
            <person name="Corby N."/>
            <person name="Coville G.J."/>
            <person name="Davies J."/>
            <person name="Deadman R."/>
            <person name="Dunn M."/>
            <person name="Earthrowl M."/>
            <person name="Ellington A.G."/>
            <person name="Errington H."/>
            <person name="Frankish A."/>
            <person name="Frankland J."/>
            <person name="French L."/>
            <person name="Garner P."/>
            <person name="Garnett J."/>
            <person name="Gay L."/>
            <person name="Ghori M.R.J."/>
            <person name="Gibson R."/>
            <person name="Gilby L.M."/>
            <person name="Gillett W."/>
            <person name="Glithero R.J."/>
            <person name="Grafham D.V."/>
            <person name="Griffiths C."/>
            <person name="Griffiths-Jones S."/>
            <person name="Grocock R."/>
            <person name="Hammond S."/>
            <person name="Harrison E.S.I."/>
            <person name="Hart E."/>
            <person name="Haugen E."/>
            <person name="Heath P.D."/>
            <person name="Holmes S."/>
            <person name="Holt K."/>
            <person name="Howden P.J."/>
            <person name="Hunt A.R."/>
            <person name="Hunt S.E."/>
            <person name="Hunter G."/>
            <person name="Isherwood J."/>
            <person name="James R."/>
            <person name="Johnson C."/>
            <person name="Johnson D."/>
            <person name="Joy A."/>
            <person name="Kay M."/>
            <person name="Kershaw J.K."/>
            <person name="Kibukawa M."/>
            <person name="Kimberley A.M."/>
            <person name="King A."/>
            <person name="Knights A.J."/>
            <person name="Lad H."/>
            <person name="Laird G."/>
            <person name="Lawlor S."/>
            <person name="Leongamornlert D.A."/>
            <person name="Lloyd D.M."/>
            <person name="Loveland J."/>
            <person name="Lovell J."/>
            <person name="Lush M.J."/>
            <person name="Lyne R."/>
            <person name="Martin S."/>
            <person name="Mashreghi-Mohammadi M."/>
            <person name="Matthews L."/>
            <person name="Matthews N.S.W."/>
            <person name="McLaren S."/>
            <person name="Milne S."/>
            <person name="Mistry S."/>
            <person name="Moore M.J.F."/>
            <person name="Nickerson T."/>
            <person name="O'Dell C.N."/>
            <person name="Oliver K."/>
            <person name="Palmeiri A."/>
            <person name="Palmer S.A."/>
            <person name="Parker A."/>
            <person name="Patel D."/>
            <person name="Pearce A.V."/>
            <person name="Peck A.I."/>
            <person name="Pelan S."/>
            <person name="Phelps K."/>
            <person name="Phillimore B.J."/>
            <person name="Plumb R."/>
            <person name="Rajan J."/>
            <person name="Raymond C."/>
            <person name="Rouse G."/>
            <person name="Saenphimmachak C."/>
            <person name="Sehra H.K."/>
            <person name="Sheridan E."/>
            <person name="Shownkeen R."/>
            <person name="Sims S."/>
            <person name="Skuce C.D."/>
            <person name="Smith M."/>
            <person name="Steward C."/>
            <person name="Subramanian S."/>
            <person name="Sycamore N."/>
            <person name="Tracey A."/>
            <person name="Tromans A."/>
            <person name="Van Helmond Z."/>
            <person name="Wall M."/>
            <person name="Wallis J.M."/>
            <person name="White S."/>
            <person name="Whitehead S.L."/>
            <person name="Wilkinson J.E."/>
            <person name="Willey D.L."/>
            <person name="Williams H."/>
            <person name="Wilming L."/>
            <person name="Wray P.W."/>
            <person name="Wu Z."/>
            <person name="Coulson A."/>
            <person name="Vaudin M."/>
            <person name="Sulston J.E."/>
            <person name="Durbin R.M."/>
            <person name="Hubbard T."/>
            <person name="Wooster R."/>
            <person name="Dunham I."/>
            <person name="Carter N.P."/>
            <person name="McVean G."/>
            <person name="Ross M.T."/>
            <person name="Harrow J."/>
            <person name="Olson M.V."/>
            <person name="Beck S."/>
            <person name="Rogers J."/>
            <person name="Bentley D.R."/>
        </authorList>
    </citation>
    <scope>NUCLEOTIDE SEQUENCE [LARGE SCALE GENOMIC DNA]</scope>
</reference>
<reference key="3">
    <citation type="submission" date="2005-09" db="EMBL/GenBank/DDBJ databases">
        <authorList>
            <person name="Mural R.J."/>
            <person name="Istrail S."/>
            <person name="Sutton G.G."/>
            <person name="Florea L."/>
            <person name="Halpern A.L."/>
            <person name="Mobarry C.M."/>
            <person name="Lippert R."/>
            <person name="Walenz B."/>
            <person name="Shatkay H."/>
            <person name="Dew I."/>
            <person name="Miller J.R."/>
            <person name="Flanigan M.J."/>
            <person name="Edwards N.J."/>
            <person name="Bolanos R."/>
            <person name="Fasulo D."/>
            <person name="Halldorsson B.V."/>
            <person name="Hannenhalli S."/>
            <person name="Turner R."/>
            <person name="Yooseph S."/>
            <person name="Lu F."/>
            <person name="Nusskern D.R."/>
            <person name="Shue B.C."/>
            <person name="Zheng X.H."/>
            <person name="Zhong F."/>
            <person name="Delcher A.L."/>
            <person name="Huson D.H."/>
            <person name="Kravitz S.A."/>
            <person name="Mouchard L."/>
            <person name="Reinert K."/>
            <person name="Remington K.A."/>
            <person name="Clark A.G."/>
            <person name="Waterman M.S."/>
            <person name="Eichler E.E."/>
            <person name="Adams M.D."/>
            <person name="Hunkapiller M.W."/>
            <person name="Myers E.W."/>
            <person name="Venter J.C."/>
        </authorList>
    </citation>
    <scope>NUCLEOTIDE SEQUENCE [LARGE SCALE GENOMIC DNA]</scope>
</reference>
<reference key="4">
    <citation type="journal article" date="2004" name="Genome Res.">
        <title>The status, quality, and expansion of the NIH full-length cDNA project: the Mammalian Gene Collection (MGC).</title>
        <authorList>
            <consortium name="The MGC Project Team"/>
        </authorList>
    </citation>
    <scope>NUCLEOTIDE SEQUENCE [LARGE SCALE MRNA] (ISOFORMS 1 AND 3)</scope>
    <source>
        <tissue>Lung</tissue>
        <tissue>Prostate</tissue>
    </source>
</reference>
<reference key="5">
    <citation type="journal article" date="2008" name="Proc. Natl. Acad. Sci. U.S.A.">
        <title>A quantitative atlas of mitotic phosphorylation.</title>
        <authorList>
            <person name="Dephoure N."/>
            <person name="Zhou C."/>
            <person name="Villen J."/>
            <person name="Beausoleil S.A."/>
            <person name="Bakalarski C.E."/>
            <person name="Elledge S.J."/>
            <person name="Gygi S.P."/>
        </authorList>
    </citation>
    <scope>IDENTIFICATION BY MASS SPECTROMETRY [LARGE SCALE ANALYSIS]</scope>
    <source>
        <tissue>Cervix carcinoma</tissue>
    </source>
</reference>
<reference key="6">
    <citation type="journal article" date="2011" name="BMC Syst. Biol.">
        <title>Initial characterization of the human central proteome.</title>
        <authorList>
            <person name="Burkard T.R."/>
            <person name="Planyavsky M."/>
            <person name="Kaupe I."/>
            <person name="Breitwieser F.P."/>
            <person name="Buerckstuemmer T."/>
            <person name="Bennett K.L."/>
            <person name="Superti-Furga G."/>
            <person name="Colinge J."/>
        </authorList>
    </citation>
    <scope>IDENTIFICATION BY MASS SPECTROMETRY [LARGE SCALE ANALYSIS]</scope>
</reference>
<reference key="7">
    <citation type="journal article" date="2014" name="J. Proteomics">
        <title>An enzyme assisted RP-RPLC approach for in-depth analysis of human liver phosphoproteome.</title>
        <authorList>
            <person name="Bian Y."/>
            <person name="Song C."/>
            <person name="Cheng K."/>
            <person name="Dong M."/>
            <person name="Wang F."/>
            <person name="Huang J."/>
            <person name="Sun D."/>
            <person name="Wang L."/>
            <person name="Ye M."/>
            <person name="Zou H."/>
        </authorList>
    </citation>
    <scope>IDENTIFICATION BY MASS SPECTROMETRY [LARGE SCALE ANALYSIS]</scope>
    <source>
        <tissue>Liver</tissue>
    </source>
</reference>
<comment type="interaction">
    <interactant intactId="EBI-6137496">
        <id>Q96K17</id>
    </interactant>
    <interactant intactId="EBI-1055671">
        <id>Q9NRG4</id>
        <label>SMYD2</label>
    </interactant>
    <organismsDiffer>false</organismsDiffer>
    <experiments>3</experiments>
</comment>
<comment type="interaction">
    <interactant intactId="EBI-6137496">
        <id>Q96K17</id>
    </interactant>
    <interactant intactId="EBI-359793">
        <id>P40222</id>
        <label>TXLNA</label>
    </interactant>
    <organismsDiffer>false</organismsDiffer>
    <experiments>6</experiments>
</comment>
<comment type="interaction">
    <interactant intactId="EBI-6137496">
        <id>Q96K17</id>
    </interactant>
    <interactant intactId="EBI-6116822">
        <id>Q8N3L3</id>
        <label>TXLNB</label>
    </interactant>
    <organismsDiffer>false</organismsDiffer>
    <experiments>3</experiments>
</comment>
<comment type="alternative products">
    <event type="alternative splicing"/>
    <isoform>
        <id>Q96K17-1</id>
        <name>1</name>
        <sequence type="displayed"/>
    </isoform>
    <isoform>
        <id>Q96K17-2</id>
        <name>2</name>
        <sequence type="described" ref="VSP_044248"/>
    </isoform>
    <isoform>
        <id>Q96K17-3</id>
        <name>3</name>
        <sequence type="described" ref="VSP_045972 VSP_045973"/>
    </isoform>
</comment>
<comment type="similarity">
    <text evidence="6">Belongs to the NAC-beta family.</text>
</comment>
<dbReference type="EMBL" id="AK027750">
    <property type="protein sequence ID" value="BAB55342.1"/>
    <property type="molecule type" value="mRNA"/>
</dbReference>
<dbReference type="EMBL" id="AK027582">
    <property type="protein sequence ID" value="BAG51353.1"/>
    <property type="molecule type" value="mRNA"/>
</dbReference>
<dbReference type="EMBL" id="AL139156">
    <property type="status" value="NOT_ANNOTATED_CDS"/>
    <property type="molecule type" value="Genomic_DNA"/>
</dbReference>
<dbReference type="EMBL" id="AL445685">
    <property type="status" value="NOT_ANNOTATED_CDS"/>
    <property type="molecule type" value="Genomic_DNA"/>
</dbReference>
<dbReference type="EMBL" id="AL606761">
    <property type="status" value="NOT_ANNOTATED_CDS"/>
    <property type="molecule type" value="Genomic_DNA"/>
</dbReference>
<dbReference type="EMBL" id="CH471059">
    <property type="protein sequence ID" value="EAX06795.1"/>
    <property type="molecule type" value="Genomic_DNA"/>
</dbReference>
<dbReference type="EMBL" id="CH471059">
    <property type="protein sequence ID" value="EAX06796.1"/>
    <property type="molecule type" value="Genomic_DNA"/>
</dbReference>
<dbReference type="EMBL" id="CH471059">
    <property type="protein sequence ID" value="EAX06797.1"/>
    <property type="molecule type" value="Genomic_DNA"/>
</dbReference>
<dbReference type="EMBL" id="CH471059">
    <property type="protein sequence ID" value="EAX06798.1"/>
    <property type="molecule type" value="Genomic_DNA"/>
</dbReference>
<dbReference type="EMBL" id="CH471059">
    <property type="protein sequence ID" value="EAX06799.1"/>
    <property type="molecule type" value="Genomic_DNA"/>
</dbReference>
<dbReference type="EMBL" id="BC022371">
    <property type="protein sequence ID" value="AAH22371.1"/>
    <property type="molecule type" value="mRNA"/>
</dbReference>
<dbReference type="EMBL" id="BC070378">
    <property type="protein sequence ID" value="AAH70378.1"/>
    <property type="molecule type" value="mRNA"/>
</dbReference>
<dbReference type="EMBL" id="BG536292">
    <property type="status" value="NOT_ANNOTATED_CDS"/>
    <property type="molecule type" value="mRNA"/>
</dbReference>
<dbReference type="CCDS" id="CCDS30713.1">
    <molecule id="Q96K17-1"/>
</dbReference>
<dbReference type="CCDS" id="CCDS44146.1">
    <molecule id="Q96K17-2"/>
</dbReference>
<dbReference type="CCDS" id="CCDS58001.1">
    <molecule id="Q96K17-3"/>
</dbReference>
<dbReference type="RefSeq" id="NP_001129969.1">
    <molecule id="Q96K17-2"/>
    <property type="nucleotide sequence ID" value="NM_001136497.3"/>
</dbReference>
<dbReference type="RefSeq" id="NP_001230696.1">
    <molecule id="Q96K17-3"/>
    <property type="nucleotide sequence ID" value="NM_001243767.2"/>
</dbReference>
<dbReference type="RefSeq" id="NP_689478.1">
    <molecule id="Q96K17-1"/>
    <property type="nucleotide sequence ID" value="NM_152265.5"/>
</dbReference>
<dbReference type="SMR" id="Q96K17"/>
<dbReference type="BioGRID" id="124828">
    <property type="interactions" value="102"/>
</dbReference>
<dbReference type="FunCoup" id="Q96K17">
    <property type="interactions" value="3157"/>
</dbReference>
<dbReference type="IntAct" id="Q96K17">
    <property type="interactions" value="54"/>
</dbReference>
<dbReference type="STRING" id="9606.ENSP00000360664"/>
<dbReference type="GlyGen" id="Q96K17">
    <property type="glycosylation" value="1 site, 1 O-linked glycan (1 site)"/>
</dbReference>
<dbReference type="iPTMnet" id="Q96K17"/>
<dbReference type="PhosphoSitePlus" id="Q96K17"/>
<dbReference type="BioMuta" id="BTF3L4"/>
<dbReference type="DMDM" id="74751972"/>
<dbReference type="jPOST" id="Q96K17"/>
<dbReference type="MassIVE" id="Q96K17"/>
<dbReference type="PaxDb" id="9606-ENSP00000360664"/>
<dbReference type="PeptideAtlas" id="Q96K17"/>
<dbReference type="ProteomicsDB" id="32328"/>
<dbReference type="ProteomicsDB" id="3502"/>
<dbReference type="ProteomicsDB" id="77024">
    <molecule id="Q96K17-1"/>
</dbReference>
<dbReference type="Pumba" id="Q96K17"/>
<dbReference type="TopDownProteomics" id="Q96K17-1">
    <molecule id="Q96K17-1"/>
</dbReference>
<dbReference type="TopDownProteomics" id="Q96K17-2">
    <molecule id="Q96K17-2"/>
</dbReference>
<dbReference type="Antibodypedia" id="32991">
    <property type="antibodies" value="115 antibodies from 24 providers"/>
</dbReference>
<dbReference type="DNASU" id="91408"/>
<dbReference type="Ensembl" id="ENST00000313334.13">
    <molecule id="Q96K17-1"/>
    <property type="protein sequence ID" value="ENSP00000360664.4"/>
    <property type="gene ID" value="ENSG00000134717.18"/>
</dbReference>
<dbReference type="Ensembl" id="ENST00000472944.6">
    <molecule id="Q96K17-2"/>
    <property type="protein sequence ID" value="ENSP00000436712.1"/>
    <property type="gene ID" value="ENSG00000134717.18"/>
</dbReference>
<dbReference type="Ensembl" id="ENST00000489308.6">
    <molecule id="Q96K17-3"/>
    <property type="protein sequence ID" value="ENSP00000434824.1"/>
    <property type="gene ID" value="ENSG00000134717.18"/>
</dbReference>
<dbReference type="GeneID" id="91408"/>
<dbReference type="KEGG" id="hsa:91408"/>
<dbReference type="MANE-Select" id="ENST00000313334.13">
    <property type="protein sequence ID" value="ENSP00000360664.4"/>
    <property type="RefSeq nucleotide sequence ID" value="NM_152265.5"/>
    <property type="RefSeq protein sequence ID" value="NP_689478.1"/>
</dbReference>
<dbReference type="UCSC" id="uc001ctk.4">
    <molecule id="Q96K17-1"/>
    <property type="organism name" value="human"/>
</dbReference>
<dbReference type="AGR" id="HGNC:30547"/>
<dbReference type="CTD" id="91408"/>
<dbReference type="GeneCards" id="BTF3L4"/>
<dbReference type="HGNC" id="HGNC:30547">
    <property type="gene designation" value="BTF3L4"/>
</dbReference>
<dbReference type="HPA" id="ENSG00000134717">
    <property type="expression patterns" value="Low tissue specificity"/>
</dbReference>
<dbReference type="neXtProt" id="NX_Q96K17"/>
<dbReference type="OpenTargets" id="ENSG00000134717"/>
<dbReference type="PharmGKB" id="PA142672545"/>
<dbReference type="VEuPathDB" id="HostDB:ENSG00000134717"/>
<dbReference type="eggNOG" id="KOG2240">
    <property type="taxonomic scope" value="Eukaryota"/>
</dbReference>
<dbReference type="GeneTree" id="ENSGT00940000154296"/>
<dbReference type="HOGENOM" id="CLU_098726_3_0_1"/>
<dbReference type="InParanoid" id="Q96K17"/>
<dbReference type="OMA" id="RMQQSVR"/>
<dbReference type="OrthoDB" id="8033832at2759"/>
<dbReference type="PAN-GO" id="Q96K17">
    <property type="GO annotations" value="0 GO annotations based on evolutionary models"/>
</dbReference>
<dbReference type="PhylomeDB" id="Q96K17"/>
<dbReference type="TreeFam" id="TF317546"/>
<dbReference type="PathwayCommons" id="Q96K17"/>
<dbReference type="SignaLink" id="Q96K17"/>
<dbReference type="BioGRID-ORCS" id="91408">
    <property type="hits" value="188 hits in 1113 CRISPR screens"/>
</dbReference>
<dbReference type="CD-CODE" id="91857CE7">
    <property type="entry name" value="Nucleolus"/>
</dbReference>
<dbReference type="ChiTaRS" id="BTF3L4">
    <property type="organism name" value="human"/>
</dbReference>
<dbReference type="GenomeRNAi" id="91408"/>
<dbReference type="Pharos" id="Q96K17">
    <property type="development level" value="Tdark"/>
</dbReference>
<dbReference type="PRO" id="PR:Q96K17"/>
<dbReference type="Proteomes" id="UP000005640">
    <property type="component" value="Chromosome 1"/>
</dbReference>
<dbReference type="RNAct" id="Q96K17">
    <property type="molecule type" value="protein"/>
</dbReference>
<dbReference type="Bgee" id="ENSG00000134717">
    <property type="expression patterns" value="Expressed in cortical plate and 187 other cell types or tissues"/>
</dbReference>
<dbReference type="ExpressionAtlas" id="Q96K17">
    <property type="expression patterns" value="baseline and differential"/>
</dbReference>
<dbReference type="CDD" id="cd22055">
    <property type="entry name" value="NAC_BTF3"/>
    <property type="match status" value="1"/>
</dbReference>
<dbReference type="FunFam" id="2.20.70.30:FF:000001">
    <property type="entry name" value="Transcription factor BTF3 homolog"/>
    <property type="match status" value="1"/>
</dbReference>
<dbReference type="Gene3D" id="2.20.70.30">
    <property type="entry name" value="Nascent polypeptide-associated complex domain"/>
    <property type="match status" value="1"/>
</dbReference>
<dbReference type="InterPro" id="IPR039370">
    <property type="entry name" value="BTF3"/>
</dbReference>
<dbReference type="InterPro" id="IPR038187">
    <property type="entry name" value="NAC_A/B_dom_sf"/>
</dbReference>
<dbReference type="InterPro" id="IPR002715">
    <property type="entry name" value="Nas_poly-pep-assoc_cplx_dom"/>
</dbReference>
<dbReference type="PANTHER" id="PTHR10351">
    <property type="entry name" value="TRANSCRIPTION FACTOR BTF3 FAMILY MEMBER"/>
    <property type="match status" value="1"/>
</dbReference>
<dbReference type="Pfam" id="PF01849">
    <property type="entry name" value="NAC"/>
    <property type="match status" value="1"/>
</dbReference>
<dbReference type="SMART" id="SM01407">
    <property type="entry name" value="NAC"/>
    <property type="match status" value="1"/>
</dbReference>
<dbReference type="PROSITE" id="PS51151">
    <property type="entry name" value="NAC_AB"/>
    <property type="match status" value="1"/>
</dbReference>
<name>BT3L4_HUMAN</name>
<proteinExistence type="evidence at protein level"/>
<feature type="chain" id="PRO_0000213557" description="Transcription factor BTF3 homolog 4">
    <location>
        <begin position="1"/>
        <end position="158"/>
    </location>
</feature>
<feature type="domain" description="NAC-A/B" evidence="2">
    <location>
        <begin position="33"/>
        <end position="98"/>
    </location>
</feature>
<feature type="region of interest" description="Disordered" evidence="3">
    <location>
        <begin position="122"/>
        <end position="158"/>
    </location>
</feature>
<feature type="compositionally biased region" description="Acidic residues" evidence="3">
    <location>
        <begin position="134"/>
        <end position="150"/>
    </location>
</feature>
<feature type="modified residue" description="N6-methyllysine" evidence="1">
    <location>
        <position position="5"/>
    </location>
</feature>
<feature type="modified residue" description="Phosphothreonine" evidence="1">
    <location>
        <position position="111"/>
    </location>
</feature>
<feature type="splice variant" id="VSP_044248" description="In isoform 2." evidence="4">
    <location>
        <begin position="1"/>
        <end position="58"/>
    </location>
</feature>
<feature type="splice variant" id="VSP_045972" description="In isoform 3." evidence="5">
    <original>VNMIKDDGTVIHFNNPKVQASL</original>
    <variation>SWTVKHQNQKTLMRKMMMFQIL</variation>
    <location>
        <begin position="57"/>
        <end position="78"/>
    </location>
</feature>
<feature type="splice variant" id="VSP_045973" description="In isoform 3." evidence="5">
    <location>
        <begin position="79"/>
        <end position="158"/>
    </location>
</feature>
<protein>
    <recommendedName>
        <fullName>Transcription factor BTF3 homolog 4</fullName>
    </recommendedName>
    <alternativeName>
        <fullName>Basic transcription factor 3-like 4</fullName>
    </alternativeName>
</protein>